<dbReference type="EC" id="1.10.3.2"/>
<dbReference type="EMBL" id="AC034107">
    <property type="protein sequence ID" value="AAF97830.1"/>
    <property type="molecule type" value="Genomic_DNA"/>
</dbReference>
<dbReference type="EMBL" id="AC069551">
    <property type="protein sequence ID" value="AAF78389.1"/>
    <property type="status" value="ALT_SEQ"/>
    <property type="molecule type" value="Genomic_DNA"/>
</dbReference>
<dbReference type="EMBL" id="CP002684">
    <property type="protein sequence ID" value="AEE29678.1"/>
    <property type="molecule type" value="Genomic_DNA"/>
</dbReference>
<dbReference type="EMBL" id="AK227320">
    <property type="protein sequence ID" value="BAE99334.1"/>
    <property type="molecule type" value="mRNA"/>
</dbReference>
<dbReference type="PIR" id="E86316">
    <property type="entry name" value="E86316"/>
</dbReference>
<dbReference type="RefSeq" id="NP_173252.2">
    <property type="nucleotide sequence ID" value="NM_101674.4"/>
</dbReference>
<dbReference type="SMR" id="Q9LMS3"/>
<dbReference type="FunCoup" id="Q9LMS3">
    <property type="interactions" value="35"/>
</dbReference>
<dbReference type="STRING" id="3702.Q9LMS3"/>
<dbReference type="GlyCosmos" id="Q9LMS3">
    <property type="glycosylation" value="5 sites, No reported glycans"/>
</dbReference>
<dbReference type="GlyGen" id="Q9LMS3">
    <property type="glycosylation" value="6 sites"/>
</dbReference>
<dbReference type="PaxDb" id="3702-AT1G18140.1"/>
<dbReference type="ProteomicsDB" id="238403"/>
<dbReference type="EnsemblPlants" id="AT1G18140.1">
    <property type="protein sequence ID" value="AT1G18140.1"/>
    <property type="gene ID" value="AT1G18140"/>
</dbReference>
<dbReference type="GeneID" id="838393"/>
<dbReference type="Gramene" id="AT1G18140.1">
    <property type="protein sequence ID" value="AT1G18140.1"/>
    <property type="gene ID" value="AT1G18140"/>
</dbReference>
<dbReference type="KEGG" id="ath:AT1G18140"/>
<dbReference type="Araport" id="AT1G18140"/>
<dbReference type="TAIR" id="AT1G18140">
    <property type="gene designation" value="LAC1"/>
</dbReference>
<dbReference type="eggNOG" id="KOG1263">
    <property type="taxonomic scope" value="Eukaryota"/>
</dbReference>
<dbReference type="HOGENOM" id="CLU_006504_6_3_1"/>
<dbReference type="InParanoid" id="Q9LMS3"/>
<dbReference type="OMA" id="FIIYPRM"/>
<dbReference type="PhylomeDB" id="Q9LMS3"/>
<dbReference type="BioCyc" id="ARA:AT1G18140-MONOMER"/>
<dbReference type="PRO" id="PR:Q9LMS3"/>
<dbReference type="Proteomes" id="UP000006548">
    <property type="component" value="Chromosome 1"/>
</dbReference>
<dbReference type="ExpressionAtlas" id="Q9LMS3">
    <property type="expression patterns" value="baseline and differential"/>
</dbReference>
<dbReference type="GO" id="GO:0048046">
    <property type="term" value="C:apoplast"/>
    <property type="evidence" value="ECO:0007669"/>
    <property type="project" value="UniProtKB-SubCell"/>
</dbReference>
<dbReference type="GO" id="GO:0048226">
    <property type="term" value="C:Casparian strip"/>
    <property type="evidence" value="ECO:0000314"/>
    <property type="project" value="TAIR"/>
</dbReference>
<dbReference type="GO" id="GO:0005507">
    <property type="term" value="F:copper ion binding"/>
    <property type="evidence" value="ECO:0007669"/>
    <property type="project" value="InterPro"/>
</dbReference>
<dbReference type="GO" id="GO:0052716">
    <property type="term" value="F:hydroquinone:oxygen oxidoreductase activity"/>
    <property type="evidence" value="ECO:0007669"/>
    <property type="project" value="UniProtKB-EC"/>
</dbReference>
<dbReference type="GO" id="GO:0046274">
    <property type="term" value="P:lignin catabolic process"/>
    <property type="evidence" value="ECO:0007669"/>
    <property type="project" value="UniProtKB-KW"/>
</dbReference>
<dbReference type="CDD" id="cd13849">
    <property type="entry name" value="CuRO_1_LCC_plant"/>
    <property type="match status" value="1"/>
</dbReference>
<dbReference type="CDD" id="cd13875">
    <property type="entry name" value="CuRO_2_LCC_plant"/>
    <property type="match status" value="1"/>
</dbReference>
<dbReference type="CDD" id="cd13897">
    <property type="entry name" value="CuRO_3_LCC_plant"/>
    <property type="match status" value="1"/>
</dbReference>
<dbReference type="Gene3D" id="2.60.40.420">
    <property type="entry name" value="Cupredoxins - blue copper proteins"/>
    <property type="match status" value="3"/>
</dbReference>
<dbReference type="InterPro" id="IPR011707">
    <property type="entry name" value="Cu-oxidase-like_N"/>
</dbReference>
<dbReference type="InterPro" id="IPR001117">
    <property type="entry name" value="Cu-oxidase_2nd"/>
</dbReference>
<dbReference type="InterPro" id="IPR011706">
    <property type="entry name" value="Cu-oxidase_C"/>
</dbReference>
<dbReference type="InterPro" id="IPR045087">
    <property type="entry name" value="Cu-oxidase_fam"/>
</dbReference>
<dbReference type="InterPro" id="IPR033138">
    <property type="entry name" value="Cu_oxidase_CS"/>
</dbReference>
<dbReference type="InterPro" id="IPR002355">
    <property type="entry name" value="Cu_oxidase_Cu_BS"/>
</dbReference>
<dbReference type="InterPro" id="IPR008972">
    <property type="entry name" value="Cupredoxin"/>
</dbReference>
<dbReference type="InterPro" id="IPR034288">
    <property type="entry name" value="CuRO_1_LCC"/>
</dbReference>
<dbReference type="InterPro" id="IPR034285">
    <property type="entry name" value="CuRO_2_LCC"/>
</dbReference>
<dbReference type="InterPro" id="IPR034289">
    <property type="entry name" value="CuRO_3_LCC"/>
</dbReference>
<dbReference type="InterPro" id="IPR017761">
    <property type="entry name" value="Laccase"/>
</dbReference>
<dbReference type="NCBIfam" id="TIGR03389">
    <property type="entry name" value="laccase"/>
    <property type="match status" value="1"/>
</dbReference>
<dbReference type="PANTHER" id="PTHR11709:SF292">
    <property type="entry name" value="LACCASE-1"/>
    <property type="match status" value="1"/>
</dbReference>
<dbReference type="PANTHER" id="PTHR11709">
    <property type="entry name" value="MULTI-COPPER OXIDASE"/>
    <property type="match status" value="1"/>
</dbReference>
<dbReference type="Pfam" id="PF00394">
    <property type="entry name" value="Cu-oxidase"/>
    <property type="match status" value="1"/>
</dbReference>
<dbReference type="Pfam" id="PF07731">
    <property type="entry name" value="Cu-oxidase_2"/>
    <property type="match status" value="1"/>
</dbReference>
<dbReference type="Pfam" id="PF07732">
    <property type="entry name" value="Cu-oxidase_3"/>
    <property type="match status" value="1"/>
</dbReference>
<dbReference type="SUPFAM" id="SSF49503">
    <property type="entry name" value="Cupredoxins"/>
    <property type="match status" value="3"/>
</dbReference>
<dbReference type="PROSITE" id="PS00079">
    <property type="entry name" value="MULTICOPPER_OXIDASE1"/>
    <property type="match status" value="1"/>
</dbReference>
<dbReference type="PROSITE" id="PS00080">
    <property type="entry name" value="MULTICOPPER_OXIDASE2"/>
    <property type="match status" value="1"/>
</dbReference>
<reference key="1">
    <citation type="journal article" date="2000" name="Nature">
        <title>Sequence and analysis of chromosome 1 of the plant Arabidopsis thaliana.</title>
        <authorList>
            <person name="Theologis A."/>
            <person name="Ecker J.R."/>
            <person name="Palm C.J."/>
            <person name="Federspiel N.A."/>
            <person name="Kaul S."/>
            <person name="White O."/>
            <person name="Alonso J."/>
            <person name="Altafi H."/>
            <person name="Araujo R."/>
            <person name="Bowman C.L."/>
            <person name="Brooks S.Y."/>
            <person name="Buehler E."/>
            <person name="Chan A."/>
            <person name="Chao Q."/>
            <person name="Chen H."/>
            <person name="Cheuk R.F."/>
            <person name="Chin C.W."/>
            <person name="Chung M.K."/>
            <person name="Conn L."/>
            <person name="Conway A.B."/>
            <person name="Conway A.R."/>
            <person name="Creasy T.H."/>
            <person name="Dewar K."/>
            <person name="Dunn P."/>
            <person name="Etgu P."/>
            <person name="Feldblyum T.V."/>
            <person name="Feng J.-D."/>
            <person name="Fong B."/>
            <person name="Fujii C.Y."/>
            <person name="Gill J.E."/>
            <person name="Goldsmith A.D."/>
            <person name="Haas B."/>
            <person name="Hansen N.F."/>
            <person name="Hughes B."/>
            <person name="Huizar L."/>
            <person name="Hunter J.L."/>
            <person name="Jenkins J."/>
            <person name="Johnson-Hopson C."/>
            <person name="Khan S."/>
            <person name="Khaykin E."/>
            <person name="Kim C.J."/>
            <person name="Koo H.L."/>
            <person name="Kremenetskaia I."/>
            <person name="Kurtz D.B."/>
            <person name="Kwan A."/>
            <person name="Lam B."/>
            <person name="Langin-Hooper S."/>
            <person name="Lee A."/>
            <person name="Lee J.M."/>
            <person name="Lenz C.A."/>
            <person name="Li J.H."/>
            <person name="Li Y.-P."/>
            <person name="Lin X."/>
            <person name="Liu S.X."/>
            <person name="Liu Z.A."/>
            <person name="Luros J.S."/>
            <person name="Maiti R."/>
            <person name="Marziali A."/>
            <person name="Militscher J."/>
            <person name="Miranda M."/>
            <person name="Nguyen M."/>
            <person name="Nierman W.C."/>
            <person name="Osborne B.I."/>
            <person name="Pai G."/>
            <person name="Peterson J."/>
            <person name="Pham P.K."/>
            <person name="Rizzo M."/>
            <person name="Rooney T."/>
            <person name="Rowley D."/>
            <person name="Sakano H."/>
            <person name="Salzberg S.L."/>
            <person name="Schwartz J.R."/>
            <person name="Shinn P."/>
            <person name="Southwick A.M."/>
            <person name="Sun H."/>
            <person name="Tallon L.J."/>
            <person name="Tambunga G."/>
            <person name="Toriumi M.J."/>
            <person name="Town C.D."/>
            <person name="Utterback T."/>
            <person name="Van Aken S."/>
            <person name="Vaysberg M."/>
            <person name="Vysotskaia V.S."/>
            <person name="Walker M."/>
            <person name="Wu D."/>
            <person name="Yu G."/>
            <person name="Fraser C.M."/>
            <person name="Venter J.C."/>
            <person name="Davis R.W."/>
        </authorList>
    </citation>
    <scope>NUCLEOTIDE SEQUENCE [LARGE SCALE GENOMIC DNA]</scope>
    <source>
        <strain>cv. Columbia</strain>
    </source>
</reference>
<reference key="2">
    <citation type="journal article" date="2017" name="Plant J.">
        <title>Araport11: a complete reannotation of the Arabidopsis thaliana reference genome.</title>
        <authorList>
            <person name="Cheng C.Y."/>
            <person name="Krishnakumar V."/>
            <person name="Chan A.P."/>
            <person name="Thibaud-Nissen F."/>
            <person name="Schobel S."/>
            <person name="Town C.D."/>
        </authorList>
    </citation>
    <scope>GENOME REANNOTATION</scope>
    <source>
        <strain>cv. Columbia</strain>
    </source>
</reference>
<reference key="3">
    <citation type="submission" date="2006-07" db="EMBL/GenBank/DDBJ databases">
        <title>Large-scale analysis of RIKEN Arabidopsis full-length (RAFL) cDNAs.</title>
        <authorList>
            <person name="Totoki Y."/>
            <person name="Seki M."/>
            <person name="Ishida J."/>
            <person name="Nakajima M."/>
            <person name="Enju A."/>
            <person name="Kamiya A."/>
            <person name="Narusaka M."/>
            <person name="Shin-i T."/>
            <person name="Nakagawa M."/>
            <person name="Sakamoto N."/>
            <person name="Oishi K."/>
            <person name="Kohara Y."/>
            <person name="Kobayashi M."/>
            <person name="Toyoda A."/>
            <person name="Sakaki Y."/>
            <person name="Sakurai T."/>
            <person name="Iida K."/>
            <person name="Akiyama K."/>
            <person name="Satou M."/>
            <person name="Toyoda T."/>
            <person name="Konagaya A."/>
            <person name="Carninci P."/>
            <person name="Kawai J."/>
            <person name="Hayashizaki Y."/>
            <person name="Shinozaki K."/>
        </authorList>
    </citation>
    <scope>NUCLEOTIDE SEQUENCE [LARGE SCALE MRNA]</scope>
    <source>
        <strain>cv. Columbia</strain>
    </source>
</reference>
<reference key="4">
    <citation type="journal article" date="2006" name="J. Exp. Bot.">
        <title>Mutant identification and characterization of the laccase gene family in Arabidopsis.</title>
        <authorList>
            <person name="Cai X."/>
            <person name="Davis E.J."/>
            <person name="Ballif J."/>
            <person name="Liang M."/>
            <person name="Bushman E."/>
            <person name="Haroldsen V."/>
            <person name="Torabinejad J."/>
            <person name="Wu Y."/>
        </authorList>
    </citation>
    <scope>TISSUE SPECIFICITY</scope>
</reference>
<keyword id="KW-0052">Apoplast</keyword>
<keyword id="KW-0186">Copper</keyword>
<keyword id="KW-0325">Glycoprotein</keyword>
<keyword id="KW-0439">Lignin degradation</keyword>
<keyword id="KW-0479">Metal-binding</keyword>
<keyword id="KW-0560">Oxidoreductase</keyword>
<keyword id="KW-1185">Reference proteome</keyword>
<keyword id="KW-0677">Repeat</keyword>
<keyword id="KW-0964">Secreted</keyword>
<keyword id="KW-0732">Signal</keyword>
<sequence>MENLGFLIISTFLLLFTTLLPYSSASTTRRFHFNVEWKKVTRLCHTKQLLTVNGQYPGPTVAVHEGDIVEIKVTNRIAHNTTIHWHGLRQYRTGWADGPAYITQCPIRSKQSYTYRFKVEDQRGTLLWHAHHSWQRASVYGAFIIYPRQPYPFSGSHIQSEIPIILGEWWNDDVDNVEKAMMKTGAGAKVSDAYTLNGLPGPLYPCSTKDTFTATVDAGKTYILRIINAALNNELFVAVANHTLTVVEVDAVYTKPVHTKAIMIAPGQTTTLLLRADQLSGGEFLIAATPYVTSVFPFNNSTTVGFIRYTGKTKPENSVNTRRRRRLTAMSTVVALPNMLDTKFATKFSDSIKSLGSAKYPCKVPTKIDKRVITTISLNLQDCPLNQTCDGYAGKRFFASMNNISFVRPPISILESYYKKQSKGVFSLDFPEKPPNRFDFTGVDPVSENMNTEFGTKLFEVEFGSRLEIVFQGTSFLNIENHPLHVHGHNFFVVGRGFGNFDPEKDPKRYNLVDPPERNTFAVPTGGWAAIRINADNPGVWFIHCHLEQHTSWGLAMGFIVKDGPLPSQTLLPPPHDLPQC</sequence>
<proteinExistence type="evidence at transcript level"/>
<protein>
    <recommendedName>
        <fullName>Laccase-1</fullName>
        <ecNumber>1.10.3.2</ecNumber>
    </recommendedName>
    <alternativeName>
        <fullName>Benzenediol:oxygen oxidoreductase 1</fullName>
    </alternativeName>
    <alternativeName>
        <fullName>Diphenol oxidase 1</fullName>
    </alternativeName>
    <alternativeName>
        <fullName>Urishiol oxidase 1</fullName>
    </alternativeName>
</protein>
<organism>
    <name type="scientific">Arabidopsis thaliana</name>
    <name type="common">Mouse-ear cress</name>
    <dbReference type="NCBI Taxonomy" id="3702"/>
    <lineage>
        <taxon>Eukaryota</taxon>
        <taxon>Viridiplantae</taxon>
        <taxon>Streptophyta</taxon>
        <taxon>Embryophyta</taxon>
        <taxon>Tracheophyta</taxon>
        <taxon>Spermatophyta</taxon>
        <taxon>Magnoliopsida</taxon>
        <taxon>eudicotyledons</taxon>
        <taxon>Gunneridae</taxon>
        <taxon>Pentapetalae</taxon>
        <taxon>rosids</taxon>
        <taxon>malvids</taxon>
        <taxon>Brassicales</taxon>
        <taxon>Brassicaceae</taxon>
        <taxon>Camelineae</taxon>
        <taxon>Arabidopsis</taxon>
    </lineage>
</organism>
<evidence type="ECO:0000250" key="1"/>
<evidence type="ECO:0000255" key="2"/>
<evidence type="ECO:0000269" key="3">
    <source>
    </source>
</evidence>
<evidence type="ECO:0000305" key="4"/>
<gene>
    <name type="primary">LAC1</name>
    <name type="ordered locus">At1g18140</name>
    <name type="ORF">T10F20.14</name>
    <name type="ORF">T10O22.11</name>
</gene>
<comment type="function">
    <text evidence="1">Lignin degradation and detoxification of lignin-derived products.</text>
</comment>
<comment type="catalytic activity">
    <reaction>
        <text>4 hydroquinone + O2 = 4 benzosemiquinone + 2 H2O</text>
        <dbReference type="Rhea" id="RHEA:11276"/>
        <dbReference type="ChEBI" id="CHEBI:15377"/>
        <dbReference type="ChEBI" id="CHEBI:15379"/>
        <dbReference type="ChEBI" id="CHEBI:17594"/>
        <dbReference type="ChEBI" id="CHEBI:17977"/>
        <dbReference type="EC" id="1.10.3.2"/>
    </reaction>
</comment>
<comment type="cofactor">
    <cofactor evidence="1">
        <name>Cu cation</name>
        <dbReference type="ChEBI" id="CHEBI:23378"/>
    </cofactor>
    <text evidence="1">Binds 4 Cu cations per monomer.</text>
</comment>
<comment type="subcellular location">
    <subcellularLocation>
        <location evidence="4">Secreted</location>
        <location evidence="4">Extracellular space</location>
        <location evidence="4">Apoplast</location>
    </subcellularLocation>
</comment>
<comment type="tissue specificity">
    <text evidence="3">Expressed in roots, stems and flowers.</text>
</comment>
<comment type="similarity">
    <text evidence="4">Belongs to the multicopper oxidase family.</text>
</comment>
<comment type="sequence caution" evidence="4">
    <conflict type="erroneous gene model prediction">
        <sequence resource="EMBL-CDS" id="AAF78389"/>
    </conflict>
</comment>
<feature type="signal peptide" evidence="2">
    <location>
        <begin position="1"/>
        <end position="25"/>
    </location>
</feature>
<feature type="chain" id="PRO_0000283629" description="Laccase-1">
    <location>
        <begin position="26"/>
        <end position="581"/>
    </location>
</feature>
<feature type="domain" description="Plastocyanin-like 1">
    <location>
        <begin position="34"/>
        <end position="150"/>
    </location>
</feature>
<feature type="domain" description="Plastocyanin-like 2">
    <location>
        <begin position="161"/>
        <end position="312"/>
    </location>
</feature>
<feature type="domain" description="Plastocyanin-like 3">
    <location>
        <begin position="429"/>
        <end position="565"/>
    </location>
</feature>
<feature type="binding site" description="type 2 copper site" evidence="1">
    <location>
        <position position="84"/>
    </location>
    <ligand>
        <name>Cu cation</name>
        <dbReference type="ChEBI" id="CHEBI:23378"/>
        <label>1</label>
    </ligand>
</feature>
<feature type="binding site" description="type 3 copper site" evidence="1">
    <location>
        <position position="86"/>
    </location>
    <ligand>
        <name>Cu cation</name>
        <dbReference type="ChEBI" id="CHEBI:23378"/>
        <label>2</label>
    </ligand>
</feature>
<feature type="binding site" description="type 3 copper site" evidence="1">
    <location>
        <position position="129"/>
    </location>
    <ligand>
        <name>Cu cation</name>
        <dbReference type="ChEBI" id="CHEBI:23378"/>
        <label>2</label>
    </ligand>
</feature>
<feature type="binding site" description="type 3 copper site" evidence="1">
    <location>
        <position position="131"/>
    </location>
    <ligand>
        <name>Cu cation</name>
        <dbReference type="ChEBI" id="CHEBI:23378"/>
        <label>3</label>
    </ligand>
</feature>
<feature type="binding site" description="type 1 copper site" evidence="1">
    <location>
        <position position="482"/>
    </location>
    <ligand>
        <name>Cu cation</name>
        <dbReference type="ChEBI" id="CHEBI:23378"/>
        <label>4</label>
    </ligand>
</feature>
<feature type="binding site" description="type 2 copper site" evidence="1">
    <location>
        <position position="485"/>
    </location>
    <ligand>
        <name>Cu cation</name>
        <dbReference type="ChEBI" id="CHEBI:23378"/>
        <label>1</label>
    </ligand>
</feature>
<feature type="binding site" description="type 3 copper site" evidence="1">
    <location>
        <position position="487"/>
    </location>
    <ligand>
        <name>Cu cation</name>
        <dbReference type="ChEBI" id="CHEBI:23378"/>
        <label>3</label>
    </ligand>
</feature>
<feature type="binding site" description="type 3 copper site" evidence="1">
    <location>
        <position position="544"/>
    </location>
    <ligand>
        <name>Cu cation</name>
        <dbReference type="ChEBI" id="CHEBI:23378"/>
        <label>3</label>
    </ligand>
</feature>
<feature type="binding site" description="type 1 copper site" evidence="1">
    <location>
        <position position="545"/>
    </location>
    <ligand>
        <name>Cu cation</name>
        <dbReference type="ChEBI" id="CHEBI:23378"/>
        <label>4</label>
    </ligand>
</feature>
<feature type="binding site" description="type 3 copper site" evidence="1">
    <location>
        <position position="546"/>
    </location>
    <ligand>
        <name>Cu cation</name>
        <dbReference type="ChEBI" id="CHEBI:23378"/>
        <label>2</label>
    </ligand>
</feature>
<feature type="binding site" description="type 1 copper site" evidence="1">
    <location>
        <position position="550"/>
    </location>
    <ligand>
        <name>Cu cation</name>
        <dbReference type="ChEBI" id="CHEBI:23378"/>
        <label>4</label>
    </ligand>
</feature>
<feature type="glycosylation site" description="N-linked (GlcNAc...) asparagine" evidence="2">
    <location>
        <position position="80"/>
    </location>
</feature>
<feature type="glycosylation site" description="N-linked (GlcNAc...) asparagine" evidence="2">
    <location>
        <position position="241"/>
    </location>
</feature>
<feature type="glycosylation site" description="N-linked (GlcNAc...) asparagine" evidence="2">
    <location>
        <position position="300"/>
    </location>
</feature>
<feature type="glycosylation site" description="N-linked (GlcNAc...) asparagine" evidence="2">
    <location>
        <position position="386"/>
    </location>
</feature>
<feature type="glycosylation site" description="N-linked (GlcNAc...) asparagine" evidence="2">
    <location>
        <position position="403"/>
    </location>
</feature>
<name>LAC1_ARATH</name>
<accession>Q9LMS3</accession>
<accession>Q9LM34</accession>